<accession>Q96LC7</accession>
<accession>A8K1I5</accession>
<accession>A8K3C7</accession>
<accession>C9JJ33</accession>
<accession>C9JM10</accession>
<accession>F8W917</accession>
<accession>Q3MIR5</accession>
<accession>Q6UXI8</accession>
<accession>Q96G54</accession>
<accession>Q96LC8</accession>
<protein>
    <recommendedName>
        <fullName>Sialic acid-binding Ig-like lectin 10</fullName>
        <shortName>Siglec-10</shortName>
    </recommendedName>
    <alternativeName>
        <fullName>Siglec-like protein 2</fullName>
    </alternativeName>
</protein>
<dbReference type="EMBL" id="AY029277">
    <property type="protein sequence ID" value="AAK40255.1"/>
    <property type="molecule type" value="Genomic_DNA"/>
</dbReference>
<dbReference type="EMBL" id="AY029277">
    <property type="protein sequence ID" value="AAK40256.1"/>
    <property type="molecule type" value="Genomic_DNA"/>
</dbReference>
<dbReference type="EMBL" id="AF310233">
    <property type="protein sequence ID" value="AAK55139.1"/>
    <property type="molecule type" value="mRNA"/>
</dbReference>
<dbReference type="EMBL" id="AF311905">
    <property type="protein sequence ID" value="AAK92542.1"/>
    <property type="molecule type" value="mRNA"/>
</dbReference>
<dbReference type="EMBL" id="AY032685">
    <property type="protein sequence ID" value="AAK51124.1"/>
    <property type="molecule type" value="mRNA"/>
</dbReference>
<dbReference type="EMBL" id="AY358337">
    <property type="protein sequence ID" value="AAQ88703.1"/>
    <property type="molecule type" value="mRNA"/>
</dbReference>
<dbReference type="EMBL" id="AK289900">
    <property type="protein sequence ID" value="BAF82589.1"/>
    <property type="molecule type" value="mRNA"/>
</dbReference>
<dbReference type="EMBL" id="AK290542">
    <property type="protein sequence ID" value="BAF83231.1"/>
    <property type="molecule type" value="mRNA"/>
</dbReference>
<dbReference type="EMBL" id="AK303514">
    <property type="status" value="NOT_ANNOTATED_CDS"/>
    <property type="molecule type" value="mRNA"/>
</dbReference>
<dbReference type="EMBL" id="AC008750">
    <property type="status" value="NOT_ANNOTATED_CDS"/>
    <property type="molecule type" value="Genomic_DNA"/>
</dbReference>
<dbReference type="EMBL" id="BC009955">
    <property type="protein sequence ID" value="AAH09955.2"/>
    <property type="molecule type" value="mRNA"/>
</dbReference>
<dbReference type="EMBL" id="BC101725">
    <property type="protein sequence ID" value="AAI01726.1"/>
    <property type="molecule type" value="mRNA"/>
</dbReference>
<dbReference type="CCDS" id="CCDS12832.1">
    <molecule id="Q96LC7-1"/>
</dbReference>
<dbReference type="CCDS" id="CCDS54301.1">
    <molecule id="Q96LC7-8"/>
</dbReference>
<dbReference type="CCDS" id="CCDS54302.1">
    <molecule id="Q96LC7-6"/>
</dbReference>
<dbReference type="CCDS" id="CCDS54303.1">
    <molecule id="Q96LC7-3"/>
</dbReference>
<dbReference type="CCDS" id="CCDS54304.1">
    <molecule id="Q96LC7-7"/>
</dbReference>
<dbReference type="CCDS" id="CCDS54305.1">
    <molecule id="Q96LC7-2"/>
</dbReference>
<dbReference type="RefSeq" id="NP_001164627.1">
    <molecule id="Q96LC7-3"/>
    <property type="nucleotide sequence ID" value="NM_001171156.2"/>
</dbReference>
<dbReference type="RefSeq" id="NP_001164628.1">
    <molecule id="Q96LC7-2"/>
    <property type="nucleotide sequence ID" value="NM_001171157.2"/>
</dbReference>
<dbReference type="RefSeq" id="NP_001164629.1">
    <molecule id="Q96LC7-7"/>
    <property type="nucleotide sequence ID" value="NM_001171158.2"/>
</dbReference>
<dbReference type="RefSeq" id="NP_001164630.1">
    <molecule id="Q96LC7-6"/>
    <property type="nucleotide sequence ID" value="NM_001171159.2"/>
</dbReference>
<dbReference type="RefSeq" id="NP_001164632.1">
    <molecule id="Q96LC7-8"/>
    <property type="nucleotide sequence ID" value="NM_001171161.2"/>
</dbReference>
<dbReference type="RefSeq" id="NP_001309034.1">
    <property type="nucleotide sequence ID" value="NM_001322105.1"/>
</dbReference>
<dbReference type="RefSeq" id="NP_149121.2">
    <molecule id="Q96LC7-1"/>
    <property type="nucleotide sequence ID" value="NM_033130.4"/>
</dbReference>
<dbReference type="SMR" id="Q96LC7"/>
<dbReference type="BioGRID" id="124602">
    <property type="interactions" value="23"/>
</dbReference>
<dbReference type="FunCoup" id="Q96LC7">
    <property type="interactions" value="570"/>
</dbReference>
<dbReference type="IntAct" id="Q96LC7">
    <property type="interactions" value="11"/>
</dbReference>
<dbReference type="MINT" id="Q96LC7"/>
<dbReference type="STRING" id="9606.ENSP00000345243"/>
<dbReference type="ChEMBL" id="CHEMBL4303061"/>
<dbReference type="GlyCosmos" id="Q96LC7">
    <property type="glycosylation" value="5 sites, No reported glycans"/>
</dbReference>
<dbReference type="GlyGen" id="Q96LC7">
    <property type="glycosylation" value="8 sites, 4 N-linked glycans (2 sites)"/>
</dbReference>
<dbReference type="iPTMnet" id="Q96LC7"/>
<dbReference type="PhosphoSitePlus" id="Q96LC7"/>
<dbReference type="BioMuta" id="SIGLEC10"/>
<dbReference type="DMDM" id="118572721"/>
<dbReference type="MassIVE" id="Q96LC7"/>
<dbReference type="PaxDb" id="9606-ENSP00000345243"/>
<dbReference type="PeptideAtlas" id="Q96LC7"/>
<dbReference type="ProteomicsDB" id="10427"/>
<dbReference type="ProteomicsDB" id="10785"/>
<dbReference type="ProteomicsDB" id="30242"/>
<dbReference type="ProteomicsDB" id="77195">
    <molecule id="Q96LC7-1"/>
</dbReference>
<dbReference type="ProteomicsDB" id="77196">
    <molecule id="Q96LC7-2"/>
</dbReference>
<dbReference type="ProteomicsDB" id="77197">
    <molecule id="Q96LC7-3"/>
</dbReference>
<dbReference type="ProteomicsDB" id="77198">
    <molecule id="Q96LC7-4"/>
</dbReference>
<dbReference type="ProteomicsDB" id="77199">
    <molecule id="Q96LC7-5"/>
</dbReference>
<dbReference type="ProteomicsDB" id="77200">
    <molecule id="Q96LC7-6"/>
</dbReference>
<dbReference type="Antibodypedia" id="19024">
    <property type="antibodies" value="336 antibodies from 29 providers"/>
</dbReference>
<dbReference type="DNASU" id="89790"/>
<dbReference type="Ensembl" id="ENST00000339313.10">
    <molecule id="Q96LC7-1"/>
    <property type="protein sequence ID" value="ENSP00000345243.4"/>
    <property type="gene ID" value="ENSG00000142512.15"/>
</dbReference>
<dbReference type="Ensembl" id="ENST00000353836.9">
    <molecule id="Q96LC7-2"/>
    <property type="protein sequence ID" value="ENSP00000342389.5"/>
    <property type="gene ID" value="ENSG00000142512.15"/>
</dbReference>
<dbReference type="Ensembl" id="ENST00000436984.6">
    <molecule id="Q96LC7-7"/>
    <property type="protein sequence ID" value="ENSP00000414324.2"/>
    <property type="gene ID" value="ENSG00000142512.15"/>
</dbReference>
<dbReference type="Ensembl" id="ENST00000439889.6">
    <molecule id="Q96LC7-3"/>
    <property type="protein sequence ID" value="ENSP00000389132.2"/>
    <property type="gene ID" value="ENSG00000142512.15"/>
</dbReference>
<dbReference type="Ensembl" id="ENST00000441969.7">
    <molecule id="Q96LC7-6"/>
    <property type="protein sequence ID" value="ENSP00000408387.2"/>
    <property type="gene ID" value="ENSG00000142512.15"/>
</dbReference>
<dbReference type="Ensembl" id="ENST00000442846.7">
    <molecule id="Q96LC7-8"/>
    <property type="protein sequence ID" value="ENSP00000395475.2"/>
    <property type="gene ID" value="ENSG00000142512.15"/>
</dbReference>
<dbReference type="GeneID" id="89790"/>
<dbReference type="KEGG" id="hsa:89790"/>
<dbReference type="MANE-Select" id="ENST00000339313.10">
    <property type="protein sequence ID" value="ENSP00000345243.4"/>
    <property type="RefSeq nucleotide sequence ID" value="NM_033130.5"/>
    <property type="RefSeq protein sequence ID" value="NP_149121.2"/>
</dbReference>
<dbReference type="UCSC" id="uc002pwo.4">
    <molecule id="Q96LC7-1"/>
    <property type="organism name" value="human"/>
</dbReference>
<dbReference type="AGR" id="HGNC:15620"/>
<dbReference type="CTD" id="89790"/>
<dbReference type="DisGeNET" id="89790"/>
<dbReference type="GeneCards" id="SIGLEC10"/>
<dbReference type="HGNC" id="HGNC:15620">
    <property type="gene designation" value="SIGLEC10"/>
</dbReference>
<dbReference type="HPA" id="ENSG00000142512">
    <property type="expression patterns" value="Tissue enhanced (lymphoid)"/>
</dbReference>
<dbReference type="MIM" id="606091">
    <property type="type" value="gene"/>
</dbReference>
<dbReference type="neXtProt" id="NX_Q96LC7"/>
<dbReference type="OpenTargets" id="ENSG00000142512"/>
<dbReference type="PharmGKB" id="PA38004"/>
<dbReference type="VEuPathDB" id="HostDB:ENSG00000142512"/>
<dbReference type="eggNOG" id="ENOG502S41V">
    <property type="taxonomic scope" value="Eukaryota"/>
</dbReference>
<dbReference type="GeneTree" id="ENSGT01080000257333"/>
<dbReference type="HOGENOM" id="CLU_024444_5_1_1"/>
<dbReference type="InParanoid" id="Q96LC7"/>
<dbReference type="OMA" id="QDVSECV"/>
<dbReference type="OrthoDB" id="10039395at2759"/>
<dbReference type="PAN-GO" id="Q96LC7">
    <property type="GO annotations" value="3 GO annotations based on evolutionary models"/>
</dbReference>
<dbReference type="PhylomeDB" id="Q96LC7"/>
<dbReference type="TreeFam" id="TF332441"/>
<dbReference type="PathwayCommons" id="Q96LC7"/>
<dbReference type="Reactome" id="R-HSA-198933">
    <property type="pathway name" value="Immunoregulatory interactions between a Lymphoid and a non-Lymphoid cell"/>
</dbReference>
<dbReference type="SignaLink" id="Q96LC7"/>
<dbReference type="SIGNOR" id="Q96LC7"/>
<dbReference type="BioGRID-ORCS" id="89790">
    <property type="hits" value="15 hits in 1149 CRISPR screens"/>
</dbReference>
<dbReference type="ChiTaRS" id="SIGLEC10">
    <property type="organism name" value="human"/>
</dbReference>
<dbReference type="GeneWiki" id="SIGLEC10"/>
<dbReference type="GenomeRNAi" id="89790"/>
<dbReference type="Pharos" id="Q96LC7">
    <property type="development level" value="Tbio"/>
</dbReference>
<dbReference type="PRO" id="PR:Q96LC7"/>
<dbReference type="Proteomes" id="UP000005640">
    <property type="component" value="Chromosome 19"/>
</dbReference>
<dbReference type="RNAct" id="Q96LC7">
    <property type="molecule type" value="protein"/>
</dbReference>
<dbReference type="Bgee" id="ENSG00000142512">
    <property type="expression patterns" value="Expressed in granulocyte and 138 other cell types or tissues"/>
</dbReference>
<dbReference type="ExpressionAtlas" id="Q96LC7">
    <property type="expression patterns" value="baseline and differential"/>
</dbReference>
<dbReference type="GO" id="GO:0005576">
    <property type="term" value="C:extracellular region"/>
    <property type="evidence" value="ECO:0007669"/>
    <property type="project" value="UniProtKB-SubCell"/>
</dbReference>
<dbReference type="GO" id="GO:0005886">
    <property type="term" value="C:plasma membrane"/>
    <property type="evidence" value="ECO:0000314"/>
    <property type="project" value="UniProtKB"/>
</dbReference>
<dbReference type="GO" id="GO:0030246">
    <property type="term" value="F:carbohydrate binding"/>
    <property type="evidence" value="ECO:0007669"/>
    <property type="project" value="UniProtKB-KW"/>
</dbReference>
<dbReference type="GO" id="GO:0019902">
    <property type="term" value="F:phosphatase binding"/>
    <property type="evidence" value="ECO:0000353"/>
    <property type="project" value="UniProtKB"/>
</dbReference>
<dbReference type="GO" id="GO:0042169">
    <property type="term" value="F:SH2 domain binding"/>
    <property type="evidence" value="ECO:0000315"/>
    <property type="project" value="UniProtKB"/>
</dbReference>
<dbReference type="GO" id="GO:0033691">
    <property type="term" value="F:sialic acid binding"/>
    <property type="evidence" value="ECO:0000318"/>
    <property type="project" value="GO_Central"/>
</dbReference>
<dbReference type="GO" id="GO:0002250">
    <property type="term" value="P:adaptive immune response"/>
    <property type="evidence" value="ECO:0007669"/>
    <property type="project" value="UniProtKB-KW"/>
</dbReference>
<dbReference type="GO" id="GO:0007155">
    <property type="term" value="P:cell adhesion"/>
    <property type="evidence" value="ECO:0000318"/>
    <property type="project" value="GO_Central"/>
</dbReference>
<dbReference type="GO" id="GO:0045087">
    <property type="term" value="P:innate immune response"/>
    <property type="evidence" value="ECO:0007669"/>
    <property type="project" value="UniProtKB-KW"/>
</dbReference>
<dbReference type="GO" id="GO:0106015">
    <property type="term" value="P:negative regulation of inflammatory response to wounding"/>
    <property type="evidence" value="ECO:0000353"/>
    <property type="project" value="UniProtKB"/>
</dbReference>
<dbReference type="CDD" id="cd05712">
    <property type="entry name" value="IgV_CD33"/>
    <property type="match status" value="1"/>
</dbReference>
<dbReference type="FunFam" id="2.60.40.10:FF:000994">
    <property type="entry name" value="Sialic acid binding Ig like lectin 10"/>
    <property type="match status" value="2"/>
</dbReference>
<dbReference type="FunFam" id="2.60.40.10:FF:001242">
    <property type="entry name" value="Sialic acid binding Ig like lectin 11"/>
    <property type="match status" value="1"/>
</dbReference>
<dbReference type="FunFam" id="2.60.40.10:FF:000829">
    <property type="entry name" value="Sialic acid-binding Ig-like lectin 8"/>
    <property type="match status" value="1"/>
</dbReference>
<dbReference type="Gene3D" id="2.60.40.10">
    <property type="entry name" value="Immunoglobulins"/>
    <property type="match status" value="4"/>
</dbReference>
<dbReference type="InterPro" id="IPR007110">
    <property type="entry name" value="Ig-like_dom"/>
</dbReference>
<dbReference type="InterPro" id="IPR036179">
    <property type="entry name" value="Ig-like_dom_sf"/>
</dbReference>
<dbReference type="InterPro" id="IPR013783">
    <property type="entry name" value="Ig-like_fold"/>
</dbReference>
<dbReference type="InterPro" id="IPR003006">
    <property type="entry name" value="Ig/MHC_CS"/>
</dbReference>
<dbReference type="InterPro" id="IPR013098">
    <property type="entry name" value="Ig_I-set"/>
</dbReference>
<dbReference type="InterPro" id="IPR003599">
    <property type="entry name" value="Ig_sub"/>
</dbReference>
<dbReference type="InterPro" id="IPR003598">
    <property type="entry name" value="Ig_sub2"/>
</dbReference>
<dbReference type="InterPro" id="IPR013106">
    <property type="entry name" value="Ig_V-set"/>
</dbReference>
<dbReference type="InterPro" id="IPR051036">
    <property type="entry name" value="SIGLEC"/>
</dbReference>
<dbReference type="PANTHER" id="PTHR12035">
    <property type="entry name" value="SIALIC ACID BINDING IMMUNOGLOBULIN-LIKE LECTIN"/>
    <property type="match status" value="1"/>
</dbReference>
<dbReference type="PANTHER" id="PTHR12035:SF115">
    <property type="entry name" value="SIALIC ACID-BINDING IG-LIKE LECTIN 10"/>
    <property type="match status" value="1"/>
</dbReference>
<dbReference type="Pfam" id="PF07679">
    <property type="entry name" value="I-set"/>
    <property type="match status" value="1"/>
</dbReference>
<dbReference type="Pfam" id="PF13927">
    <property type="entry name" value="Ig_3"/>
    <property type="match status" value="1"/>
</dbReference>
<dbReference type="Pfam" id="PF07686">
    <property type="entry name" value="V-set"/>
    <property type="match status" value="1"/>
</dbReference>
<dbReference type="SMART" id="SM00409">
    <property type="entry name" value="IG"/>
    <property type="match status" value="4"/>
</dbReference>
<dbReference type="SMART" id="SM00408">
    <property type="entry name" value="IGc2"/>
    <property type="match status" value="2"/>
</dbReference>
<dbReference type="SUPFAM" id="SSF48726">
    <property type="entry name" value="Immunoglobulin"/>
    <property type="match status" value="5"/>
</dbReference>
<dbReference type="PROSITE" id="PS50835">
    <property type="entry name" value="IG_LIKE"/>
    <property type="match status" value="3"/>
</dbReference>
<dbReference type="PROSITE" id="PS00290">
    <property type="entry name" value="IG_MHC"/>
    <property type="match status" value="1"/>
</dbReference>
<sequence>MLLPLLLSSLLGGSQAMDGRFWIRVQESVMVPEGLCISVPCSFSYPRQDWTGSTPAYGYWFKAVTETTKGAPVATNHQSREVEMSTRGRFQLTGDPAKGNCSLVIRDAQMQDESQYFFRVERGSYVRYNFMNDGFFLKVTALTQKPDVYIPETLEPGQPVTVICVFNWAFEECPPPSFSWTGAALSSQGTKPTTSHFSVLSFTPRPQDHNTDLTCHVDFSRKGVSAQRTVRLRVAYAPRDLVISISRDNTPALEPQPQGNVPYLEAQKGQFLRLLCAADSQPPATLSWVLQNRVLSSSHPWGPRPLGLELPGVKAGDSGRYTCRAENRLGSQQRALDLSVQYPPENLRVMVSQANRTVLENLGNGTSLPVLEGQSLCLVCVTHSSPPARLSWTQRGQVLSPSQPSDPGVLELPRVQVEHEGEFTCHARHPLGSQHVSLSLSVHYSPKLLGPSCSWEAEGLHCSCSSQASPAPSLRWWLGEELLEGNSSQDSFEVTPSSAGPWANSSLSLHGGLSSGLRLRCEAWNVHGAQSGSILQLPDKKGLISTAFSNGAFLGIGITALLFLCLALIIMKILPKRRTQTETPRPRFSRHSTILDYINVVPTAGPLAQKRNQKATPNSPRTPLPPGAPSPESKKNQKKQYQLPSFPEPKSSTQAPESQESQEELHYATLNFPGVRPRPEARMPKGTQADYAEVKFQ</sequence>
<feature type="signal peptide" evidence="3">
    <location>
        <begin position="1"/>
        <end position="16"/>
    </location>
</feature>
<feature type="chain" id="PRO_0000014950" description="Sialic acid-binding Ig-like lectin 10">
    <location>
        <begin position="17"/>
        <end position="697"/>
    </location>
</feature>
<feature type="topological domain" description="Extracellular" evidence="3">
    <location>
        <begin position="17"/>
        <end position="550"/>
    </location>
</feature>
<feature type="transmembrane region" description="Helical" evidence="3">
    <location>
        <begin position="551"/>
        <end position="571"/>
    </location>
</feature>
<feature type="topological domain" description="Cytoplasmic" evidence="3">
    <location>
        <begin position="572"/>
        <end position="697"/>
    </location>
</feature>
<feature type="domain" description="Ig-like V-type">
    <location>
        <begin position="18"/>
        <end position="121"/>
    </location>
</feature>
<feature type="domain" description="Ig-like C2-type 1">
    <location>
        <begin position="146"/>
        <end position="231"/>
    </location>
</feature>
<feature type="domain" description="Ig-like C2-type 2">
    <location>
        <begin position="251"/>
        <end position="339"/>
    </location>
</feature>
<feature type="domain" description="Ig-like C2-type 3">
    <location>
        <begin position="344"/>
        <end position="441"/>
    </location>
</feature>
<feature type="region of interest" description="Disordered" evidence="5">
    <location>
        <begin position="606"/>
        <end position="697"/>
    </location>
</feature>
<feature type="short sequence motif" description="ITIM motif 1">
    <location>
        <begin position="595"/>
        <end position="600"/>
    </location>
</feature>
<feature type="short sequence motif" description="ITIM motif 2">
    <location>
        <begin position="665"/>
        <end position="670"/>
    </location>
</feature>
<feature type="compositionally biased region" description="Pro residues" evidence="5">
    <location>
        <begin position="620"/>
        <end position="629"/>
    </location>
</feature>
<feature type="compositionally biased region" description="Polar residues" evidence="5">
    <location>
        <begin position="650"/>
        <end position="659"/>
    </location>
</feature>
<feature type="binding site" evidence="1">
    <location>
        <position position="119"/>
    </location>
    <ligand>
        <name>N-acetylneuraminate</name>
        <dbReference type="ChEBI" id="CHEBI:35418"/>
    </ligand>
</feature>
<feature type="modified residue" description="Phosphotyrosine" evidence="8">
    <location>
        <position position="667"/>
    </location>
</feature>
<feature type="glycosylation site" description="N-linked (GlcNAc...) asparagine" evidence="3">
    <location>
        <position position="100"/>
    </location>
</feature>
<feature type="glycosylation site" description="N-linked (GlcNAc...) asparagine" evidence="3">
    <location>
        <position position="355"/>
    </location>
</feature>
<feature type="glycosylation site" description="N-linked (GlcNAc...) asparagine" evidence="3">
    <location>
        <position position="364"/>
    </location>
</feature>
<feature type="glycosylation site" description="N-linked (GlcNAc...) asparagine" evidence="3">
    <location>
        <position position="486"/>
    </location>
</feature>
<feature type="glycosylation site" description="N-linked (GlcNAc...) asparagine" evidence="3">
    <location>
        <position position="504"/>
    </location>
</feature>
<feature type="disulfide bond" evidence="4">
    <location>
        <begin position="36"/>
        <end position="173"/>
    </location>
</feature>
<feature type="disulfide bond" evidence="4">
    <location>
        <begin position="41"/>
        <end position="101"/>
    </location>
</feature>
<feature type="disulfide bond" evidence="4">
    <location>
        <begin position="164"/>
        <end position="215"/>
    </location>
</feature>
<feature type="disulfide bond" evidence="4">
    <location>
        <begin position="276"/>
        <end position="323"/>
    </location>
</feature>
<feature type="disulfide bond" evidence="4">
    <location>
        <begin position="380"/>
        <end position="425"/>
    </location>
</feature>
<feature type="splice variant" id="VSP_002561" description="In isoform 4." evidence="17">
    <location>
        <begin position="125"/>
        <end position="214"/>
    </location>
</feature>
<feature type="splice variant" id="VSP_002562" description="In isoform 5." evidence="17">
    <original>TALTQKPDVYIPETLEPGQPVTVICVFNWAFEECPPPSFSWTGAAL</original>
    <variation>TGMRWGGNPCLSHWGGTLGTAYGLSREGSQGPLQHKNLPPRSLSQP</variation>
    <location>
        <begin position="140"/>
        <end position="185"/>
    </location>
</feature>
<feature type="splice variant" id="VSP_002564" description="In isoform 3, isoform 6 and isoform 8." evidence="14 15 16">
    <location>
        <begin position="141"/>
        <end position="198"/>
    </location>
</feature>
<feature type="splice variant" id="VSP_045365" description="In isoform 7." evidence="16">
    <location>
        <begin position="141"/>
        <end position="188"/>
    </location>
</feature>
<feature type="splice variant" id="VSP_045888" description="In isoform 9." evidence="17">
    <location>
        <begin position="146"/>
        <end position="228"/>
    </location>
</feature>
<feature type="splice variant" id="VSP_002563" description="In isoform 5." evidence="17">
    <location>
        <begin position="186"/>
        <end position="697"/>
    </location>
</feature>
<feature type="splice variant" id="VSP_045853" description="In isoform 8." evidence="17">
    <original>A</original>
    <variation>D</variation>
    <location>
        <position position="252"/>
    </location>
</feature>
<feature type="splice variant" id="VSP_045854" description="In isoform 8." evidence="17">
    <location>
        <begin position="253"/>
        <end position="342"/>
    </location>
</feature>
<feature type="splice variant" id="VSP_002565" description="In isoform 2, isoform 6, isoform 7, isoform 8 and isoform 9." evidence="13 15 16">
    <location>
        <begin position="445"/>
        <end position="539"/>
    </location>
</feature>
<feature type="sequence variant" id="VAR_019955" description="In dbSNP:rs9304711." evidence="6 7 8 9 10">
    <original>A</original>
    <variation>V</variation>
    <location>
        <position position="226"/>
    </location>
</feature>
<feature type="sequence variant" id="VAR_019956" description="In dbSNP:rs1833785.">
    <original>R</original>
    <variation>S</variation>
    <location>
        <position position="520"/>
    </location>
</feature>
<feature type="mutagenesis site" description="Disrupts interaction with CD24." evidence="11">
    <original>R</original>
    <variation>A</variation>
    <location>
        <position position="119"/>
    </location>
</feature>
<feature type="mutagenesis site" description="Abolishes binding to PTPN6." evidence="8">
    <original>Y</original>
    <variation>F</variation>
    <location>
        <position position="667"/>
    </location>
</feature>
<feature type="sequence conflict" description="In Ref. 4; AAK51124." evidence="17" ref="4">
    <original>S</original>
    <variation>P</variation>
    <location>
        <position position="28"/>
    </location>
</feature>
<feature type="sequence conflict" description="In Ref. 5; AAQ88703." evidence="17" ref="5">
    <original>R</original>
    <variation>T</variation>
    <location>
        <position position="127"/>
    </location>
</feature>
<feature type="sequence conflict" description="In Ref. 4; AAK51124." evidence="17" ref="4">
    <original>G</original>
    <variation>R</variation>
    <location>
        <position position="134"/>
    </location>
</feature>
<feature type="sequence conflict" description="In Ref. 6; AK303514." evidence="17" ref="6">
    <original>K</original>
    <variation>R</variation>
    <location>
        <position position="268"/>
    </location>
</feature>
<feature type="sequence conflict" description="In Ref. 3; AAK92542." evidence="17" ref="3">
    <original>P</original>
    <variation>S</variation>
    <location>
        <position position="344"/>
    </location>
</feature>
<feature type="sequence conflict" description="In Ref. 4; AAK51124." evidence="17" ref="4">
    <original>L</original>
    <variation>P</variation>
    <location>
        <position position="440"/>
    </location>
</feature>
<feature type="sequence conflict" description="In Ref. 6; AK303514." evidence="17" ref="6">
    <original>L</original>
    <variation>P</variation>
    <location>
        <position position="564"/>
    </location>
</feature>
<feature type="sequence conflict" description="In Ref. 3; AAK92542." evidence="17" ref="3">
    <original>R</original>
    <variation>K</variation>
    <location>
        <position position="587"/>
    </location>
</feature>
<feature type="sequence conflict" description="In Ref. 5; AAQ88703." evidence="17" ref="5">
    <original>L</original>
    <variation>P</variation>
    <location>
        <position position="624"/>
    </location>
</feature>
<feature type="sequence conflict" description="In Ref. 3; AAK92542." evidence="17" ref="3">
    <original>P</original>
    <variation>S</variation>
    <location>
        <position position="625"/>
    </location>
</feature>
<keyword id="KW-1064">Adaptive immunity</keyword>
<keyword id="KW-0025">Alternative splicing</keyword>
<keyword id="KW-0130">Cell adhesion</keyword>
<keyword id="KW-1003">Cell membrane</keyword>
<keyword id="KW-1015">Disulfide bond</keyword>
<keyword id="KW-0325">Glycoprotein</keyword>
<keyword id="KW-0391">Immunity</keyword>
<keyword id="KW-0393">Immunoglobulin domain</keyword>
<keyword id="KW-0399">Innate immunity</keyword>
<keyword id="KW-0430">Lectin</keyword>
<keyword id="KW-0472">Membrane</keyword>
<keyword id="KW-0597">Phosphoprotein</keyword>
<keyword id="KW-1267">Proteomics identification</keyword>
<keyword id="KW-1185">Reference proteome</keyword>
<keyword id="KW-0677">Repeat</keyword>
<keyword id="KW-0964">Secreted</keyword>
<keyword id="KW-0732">Signal</keyword>
<keyword id="KW-0812">Transmembrane</keyword>
<keyword id="KW-1133">Transmembrane helix</keyword>
<gene>
    <name type="primary">SIGLEC10</name>
    <name type="synonym">SLG2</name>
    <name type="ORF">UNQ477/PRO940</name>
</gene>
<comment type="function">
    <text evidence="2 6 12 18">Putative adhesion molecule that mediates sialic-acid dependent binding to cells. Preferentially binds to alpha-2,3- or alpha-2,6-linked sialic acid (By similarity). The sialic acid recognition site may be masked by cis interactions with sialic acids on the same cell surface. In the immune response, seems to act as an inhibitory receptor upon ligand induced tyrosine phosphorylation by recruiting cytoplasmic phosphatase(s) via their SH2 domain(s) that block signal transduction through dephosphorylation of signaling molecules (PubMed:11284738, PubMed:12163025). Involved in negative regulation of B-cell antigen receptor signaling. The inhibition of B cell activation is dependent on PTPN6/SHP-1 (By similarity). In association with CD24 may be involved in the selective suppression of the immune response to danger-associated molecular patterns (DAMPs) such as HMGB1, HSP70 and HSP90 (By similarity). In association with CD24 may regulate the immune repsonse of natural killer (NK) cells (PubMed:25450598). Plays a role in the control of autoimmunity (By similarity). During initiation of adaptive immune responses by CD8-alpha(+) dendritic cells inhibits cross-presentation by impairing the formation of MHC class I-peptide complexes. The function seems to implicate recruitment of PTPN6/SHP-1, which dephosphorylates NCF1 of the NADPH oxidase complex consequently promoting phagosomal acidification (By similarity).</text>
</comment>
<comment type="subunit">
    <text evidence="2 8 11">Interacts with PTPN6/SHP-1 upon phosphorylation (PubMed:12163025). Interacts with NCF1 (By similarity). Interacts with CD24; the probable CD24:SIGLEC10 complex is proposed to inhibit HGMB1-mediated tissue damage immune response. Interacts with HMGB1; the interaction is dependent on CD24 (PubMed:19264983). Interacts with RIGI, CBL and PTPN11 (By similarity).</text>
</comment>
<comment type="subcellular location">
    <molecule>Isoform 1</molecule>
    <subcellularLocation>
        <location>Cell membrane</location>
        <topology>Single-pass type I membrane protein</topology>
    </subcellularLocation>
</comment>
<comment type="subcellular location">
    <molecule>Isoform 2</molecule>
    <subcellularLocation>
        <location>Cell membrane</location>
        <topology>Single-pass type I membrane protein</topology>
    </subcellularLocation>
</comment>
<comment type="subcellular location">
    <molecule>Isoform 3</molecule>
    <subcellularLocation>
        <location>Cell membrane</location>
        <topology>Single-pass type I membrane protein</topology>
    </subcellularLocation>
</comment>
<comment type="subcellular location">
    <molecule>Isoform 4</molecule>
    <subcellularLocation>
        <location>Cell membrane</location>
        <topology>Single-pass type I membrane protein</topology>
    </subcellularLocation>
</comment>
<comment type="subcellular location">
    <molecule>Isoform 5</molecule>
    <subcellularLocation>
        <location>Secreted</location>
    </subcellularLocation>
</comment>
<comment type="alternative products">
    <event type="alternative splicing"/>
    <isoform>
        <id>Q96LC7-1</id>
        <name>1</name>
        <name>Long</name>
        <sequence type="displayed"/>
    </isoform>
    <isoform>
        <id>Q96LC7-2</id>
        <name>2</name>
        <name>Short</name>
        <name>Sv1</name>
        <sequence type="described" ref="VSP_002565"/>
    </isoform>
    <isoform>
        <id>Q96LC7-3</id>
        <name>3</name>
        <name>Sv3</name>
        <sequence type="described" ref="VSP_002564"/>
    </isoform>
    <isoform>
        <id>Q96LC7-4</id>
        <name>4</name>
        <name>Sv4</name>
        <sequence type="described" ref="VSP_002561"/>
    </isoform>
    <isoform>
        <id>Q96LC7-5</id>
        <name>5</name>
        <name>Sv2</name>
        <sequence type="described" ref="VSP_002562 VSP_002563"/>
    </isoform>
    <isoform>
        <id>Q96LC7-6</id>
        <name>6</name>
        <sequence type="described" ref="VSP_002564 VSP_002565"/>
    </isoform>
    <isoform>
        <id>Q96LC7-7</id>
        <name>7</name>
        <sequence type="described" ref="VSP_045365 VSP_002565"/>
    </isoform>
    <isoform>
        <id>Q96LC7-8</id>
        <name>8</name>
        <sequence type="described" ref="VSP_002564 VSP_045853 VSP_045854 VSP_002565"/>
    </isoform>
    <isoform>
        <id>Q96LC7-9</id>
        <name>9</name>
        <sequence type="described" ref="VSP_045888 VSP_002565"/>
    </isoform>
</comment>
<comment type="tissue specificity">
    <text evidence="6 7 8">Expressed by peripheral blood leukocytes (eosinophils, monocytes and a natural killer cell subpopulation). Isoform 5 is found to be the most abundant isoform. Found in lymph node, lung, ovary and appendix. Isoform 1 is found at high levels and isoform 2 at lower levels in bone marrow, spleen and spinal cord. Isoform 2 is also found in brain. Isoform 4 is specifically found in natural killer cells.</text>
</comment>
<comment type="domain">
    <text>Contains 1 copy of a cytoplasmic motif that is referred to as the immunoreceptor tyrosine-based inhibitor motif (ITIM). This motif is involved in modulation of cellular responses. The phosphorylated ITIM motif can bind the SH2 domain of several SH2-containing phosphatases.</text>
</comment>
<comment type="PTM">
    <text evidence="8">Phosphorylation of Tyr-667 is involved in binding to PTPN6.</text>
</comment>
<comment type="similarity">
    <text evidence="17">Belongs to the immunoglobulin superfamily. SIGLEC (sialic acid binding Ig-like lectin) family.</text>
</comment>
<comment type="online information" name="Functional Glycomics Gateway - Glycan Binding">
    <link uri="http://www.functionalglycomics.org/glycomics/GBPServlet?&amp;operationType=view&amp;cbpId=cbp_hum_Itlect_00002"/>
    <text>Siglec-10 [5 Fc Domains]</text>
</comment>
<comment type="online information" name="Functional Glycomics Gateway - Glycan Binding">
    <link uri="http://www.functionalglycomics.org/glycomics/GBPServlet?&amp;operationType=view&amp;cbpId=cbp_hum_Itlect_268"/>
    <text>Siglec-10 long</text>
</comment>
<name>SIG10_HUMAN</name>
<organism>
    <name type="scientific">Homo sapiens</name>
    <name type="common">Human</name>
    <dbReference type="NCBI Taxonomy" id="9606"/>
    <lineage>
        <taxon>Eukaryota</taxon>
        <taxon>Metazoa</taxon>
        <taxon>Chordata</taxon>
        <taxon>Craniata</taxon>
        <taxon>Vertebrata</taxon>
        <taxon>Euteleostomi</taxon>
        <taxon>Mammalia</taxon>
        <taxon>Eutheria</taxon>
        <taxon>Euarchontoglires</taxon>
        <taxon>Primates</taxon>
        <taxon>Haplorrhini</taxon>
        <taxon>Catarrhini</taxon>
        <taxon>Hominidae</taxon>
        <taxon>Homo</taxon>
    </lineage>
</organism>
<evidence type="ECO:0000250" key="1"/>
<evidence type="ECO:0000250" key="2">
    <source>
        <dbReference type="UniProtKB" id="Q80ZE3"/>
    </source>
</evidence>
<evidence type="ECO:0000255" key="3"/>
<evidence type="ECO:0000255" key="4">
    <source>
        <dbReference type="PROSITE-ProRule" id="PRU00114"/>
    </source>
</evidence>
<evidence type="ECO:0000256" key="5">
    <source>
        <dbReference type="SAM" id="MobiDB-lite"/>
    </source>
</evidence>
<evidence type="ECO:0000269" key="6">
    <source>
    </source>
</evidence>
<evidence type="ECO:0000269" key="7">
    <source>
    </source>
</evidence>
<evidence type="ECO:0000269" key="8">
    <source>
    </source>
</evidence>
<evidence type="ECO:0000269" key="9">
    <source>
    </source>
</evidence>
<evidence type="ECO:0000269" key="10">
    <source>
    </source>
</evidence>
<evidence type="ECO:0000269" key="11">
    <source>
    </source>
</evidence>
<evidence type="ECO:0000269" key="12">
    <source>
    </source>
</evidence>
<evidence type="ECO:0000303" key="13">
    <source>
    </source>
</evidence>
<evidence type="ECO:0000303" key="14">
    <source>
    </source>
</evidence>
<evidence type="ECO:0000303" key="15">
    <source>
    </source>
</evidence>
<evidence type="ECO:0000303" key="16">
    <source>
    </source>
</evidence>
<evidence type="ECO:0000305" key="17"/>
<evidence type="ECO:0000305" key="18">
    <source>
    </source>
</evidence>
<proteinExistence type="evidence at protein level"/>
<reference key="1">
    <citation type="journal article" date="2001" name="Biochem. Biophys. Res. Commun.">
        <title>Molecular characterization, tissue expression, and mapping of a novel Siglec-like gene (SLG2) with three splice variants.</title>
        <authorList>
            <person name="Yousef G.M."/>
            <person name="Ordon M.H."/>
            <person name="Foussias G."/>
            <person name="Diamandis E.P."/>
        </authorList>
    </citation>
    <scope>NUCLEOTIDE SEQUENCE [GENOMIC DNA] (ISOFORMS 1 AND 2)</scope>
</reference>
<reference key="2">
    <citation type="journal article" date="2001" name="Biochem. J.">
        <title>Identification, characterization and leucocyte expression of Siglec-10, a novel human sialic acid-binding receptor.</title>
        <authorList>
            <person name="Munday J."/>
            <person name="Kerr S."/>
            <person name="Ni J."/>
            <person name="Cornish A.L."/>
            <person name="Zhang J.Q."/>
            <person name="Nicoll G."/>
            <person name="Floyd H."/>
            <person name="Mattei M.-G."/>
            <person name="Moore P."/>
            <person name="Liu D."/>
            <person name="Crocker P.R."/>
        </authorList>
    </citation>
    <scope>NUCLEOTIDE SEQUENCE [MRNA] (ISOFORM 1)</scope>
    <scope>FUNCTION</scope>
    <scope>TISSUE SPECIFICITY</scope>
    <scope>VARIANT VAL-226</scope>
    <source>
        <tissue>Spleen</tissue>
    </source>
</reference>
<reference key="3">
    <citation type="journal article" date="2001" name="J. Biol. Chem.">
        <title>Cloning and characterization of Siglec-10, a novel sialic acid binding member of the Ig superfamily, from human dendritic cells.</title>
        <authorList>
            <person name="Li N."/>
            <person name="Zhang W."/>
            <person name="Wan T."/>
            <person name="Zhang J."/>
            <person name="Chen T."/>
            <person name="Yu Y."/>
            <person name="Wang J."/>
            <person name="Cao X."/>
        </authorList>
    </citation>
    <scope>NUCLEOTIDE SEQUENCE [MRNA] (ISOFORM 2)</scope>
    <scope>TISSUE SPECIFICITY</scope>
    <scope>VARIANT VAL-226</scope>
    <source>
        <tissue>Dendritic cell</tissue>
    </source>
</reference>
<reference key="4">
    <citation type="journal article" date="2002" name="Biochem. Biophys. Res. Commun.">
        <title>Cloning of two new splice variants of Siglec-10 and mapping of the interaction between Siglec-10 and SHP-1.</title>
        <authorList>
            <person name="Kitzig F."/>
            <person name="Martinez-Barriocanal A."/>
            <person name="Lopez-Botet M."/>
            <person name="Sayos J."/>
        </authorList>
    </citation>
    <scope>NUCLEOTIDE SEQUENCE [MRNA] (ISOFORM 3)</scope>
    <scope>ALTERNATIVE SPLICING (ISOFORMS 4 AND 5)</scope>
    <scope>TISSUE SPECIFICITY</scope>
    <scope>VARIANT VAL-226</scope>
    <scope>PHOSPHORYLATION AT TYR-667</scope>
    <scope>MUTAGENESIS OF TYR-667</scope>
    <scope>INTERACTION WITH PTPN6</scope>
    <scope>FUNCTION</scope>
</reference>
<reference key="5">
    <citation type="journal article" date="2003" name="Genome Res.">
        <title>The secreted protein discovery initiative (SPDI), a large-scale effort to identify novel human secreted and transmembrane proteins: a bioinformatics assessment.</title>
        <authorList>
            <person name="Clark H.F."/>
            <person name="Gurney A.L."/>
            <person name="Abaya E."/>
            <person name="Baker K."/>
            <person name="Baldwin D.T."/>
            <person name="Brush J."/>
            <person name="Chen J."/>
            <person name="Chow B."/>
            <person name="Chui C."/>
            <person name="Crowley C."/>
            <person name="Currell B."/>
            <person name="Deuel B."/>
            <person name="Dowd P."/>
            <person name="Eaton D."/>
            <person name="Foster J.S."/>
            <person name="Grimaldi C."/>
            <person name="Gu Q."/>
            <person name="Hass P.E."/>
            <person name="Heldens S."/>
            <person name="Huang A."/>
            <person name="Kim H.S."/>
            <person name="Klimowski L."/>
            <person name="Jin Y."/>
            <person name="Johnson S."/>
            <person name="Lee J."/>
            <person name="Lewis L."/>
            <person name="Liao D."/>
            <person name="Mark M.R."/>
            <person name="Robbie E."/>
            <person name="Sanchez C."/>
            <person name="Schoenfeld J."/>
            <person name="Seshagiri S."/>
            <person name="Simmons L."/>
            <person name="Singh J."/>
            <person name="Smith V."/>
            <person name="Stinson J."/>
            <person name="Vagts A."/>
            <person name="Vandlen R.L."/>
            <person name="Watanabe C."/>
            <person name="Wieand D."/>
            <person name="Woods K."/>
            <person name="Xie M.-H."/>
            <person name="Yansura D.G."/>
            <person name="Yi S."/>
            <person name="Yu G."/>
            <person name="Yuan J."/>
            <person name="Zhang M."/>
            <person name="Zhang Z."/>
            <person name="Goddard A.D."/>
            <person name="Wood W.I."/>
            <person name="Godowski P.J."/>
            <person name="Gray A.M."/>
        </authorList>
    </citation>
    <scope>NUCLEOTIDE SEQUENCE [LARGE SCALE MRNA] (ISOFORM 6)</scope>
</reference>
<reference key="6">
    <citation type="journal article" date="2004" name="Nat. Genet.">
        <title>Complete sequencing and characterization of 21,243 full-length human cDNAs.</title>
        <authorList>
            <person name="Ota T."/>
            <person name="Suzuki Y."/>
            <person name="Nishikawa T."/>
            <person name="Otsuki T."/>
            <person name="Sugiyama T."/>
            <person name="Irie R."/>
            <person name="Wakamatsu A."/>
            <person name="Hayashi K."/>
            <person name="Sato H."/>
            <person name="Nagai K."/>
            <person name="Kimura K."/>
            <person name="Makita H."/>
            <person name="Sekine M."/>
            <person name="Obayashi M."/>
            <person name="Nishi T."/>
            <person name="Shibahara T."/>
            <person name="Tanaka T."/>
            <person name="Ishii S."/>
            <person name="Yamamoto J."/>
            <person name="Saito K."/>
            <person name="Kawai Y."/>
            <person name="Isono Y."/>
            <person name="Nakamura Y."/>
            <person name="Nagahari K."/>
            <person name="Murakami K."/>
            <person name="Yasuda T."/>
            <person name="Iwayanagi T."/>
            <person name="Wagatsuma M."/>
            <person name="Shiratori A."/>
            <person name="Sudo H."/>
            <person name="Hosoiri T."/>
            <person name="Kaku Y."/>
            <person name="Kodaira H."/>
            <person name="Kondo H."/>
            <person name="Sugawara M."/>
            <person name="Takahashi M."/>
            <person name="Kanda K."/>
            <person name="Yokoi T."/>
            <person name="Furuya T."/>
            <person name="Kikkawa E."/>
            <person name="Omura Y."/>
            <person name="Abe K."/>
            <person name="Kamihara K."/>
            <person name="Katsuta N."/>
            <person name="Sato K."/>
            <person name="Tanikawa M."/>
            <person name="Yamazaki M."/>
            <person name="Ninomiya K."/>
            <person name="Ishibashi T."/>
            <person name="Yamashita H."/>
            <person name="Murakawa K."/>
            <person name="Fujimori K."/>
            <person name="Tanai H."/>
            <person name="Kimata M."/>
            <person name="Watanabe M."/>
            <person name="Hiraoka S."/>
            <person name="Chiba Y."/>
            <person name="Ishida S."/>
            <person name="Ono Y."/>
            <person name="Takiguchi S."/>
            <person name="Watanabe S."/>
            <person name="Yosida M."/>
            <person name="Hotuta T."/>
            <person name="Kusano J."/>
            <person name="Kanehori K."/>
            <person name="Takahashi-Fujii A."/>
            <person name="Hara H."/>
            <person name="Tanase T.-O."/>
            <person name="Nomura Y."/>
            <person name="Togiya S."/>
            <person name="Komai F."/>
            <person name="Hara R."/>
            <person name="Takeuchi K."/>
            <person name="Arita M."/>
            <person name="Imose N."/>
            <person name="Musashino K."/>
            <person name="Yuuki H."/>
            <person name="Oshima A."/>
            <person name="Sasaki N."/>
            <person name="Aotsuka S."/>
            <person name="Yoshikawa Y."/>
            <person name="Matsunawa H."/>
            <person name="Ichihara T."/>
            <person name="Shiohata N."/>
            <person name="Sano S."/>
            <person name="Moriya S."/>
            <person name="Momiyama H."/>
            <person name="Satoh N."/>
            <person name="Takami S."/>
            <person name="Terashima Y."/>
            <person name="Suzuki O."/>
            <person name="Nakagawa S."/>
            <person name="Senoh A."/>
            <person name="Mizoguchi H."/>
            <person name="Goto Y."/>
            <person name="Shimizu F."/>
            <person name="Wakebe H."/>
            <person name="Hishigaki H."/>
            <person name="Watanabe T."/>
            <person name="Sugiyama A."/>
            <person name="Takemoto M."/>
            <person name="Kawakami B."/>
            <person name="Yamazaki M."/>
            <person name="Watanabe K."/>
            <person name="Kumagai A."/>
            <person name="Itakura S."/>
            <person name="Fukuzumi Y."/>
            <person name="Fujimori Y."/>
            <person name="Komiyama M."/>
            <person name="Tashiro H."/>
            <person name="Tanigami A."/>
            <person name="Fujiwara T."/>
            <person name="Ono T."/>
            <person name="Yamada K."/>
            <person name="Fujii Y."/>
            <person name="Ozaki K."/>
            <person name="Hirao M."/>
            <person name="Ohmori Y."/>
            <person name="Kawabata A."/>
            <person name="Hikiji T."/>
            <person name="Kobatake N."/>
            <person name="Inagaki H."/>
            <person name="Ikema Y."/>
            <person name="Okamoto S."/>
            <person name="Okitani R."/>
            <person name="Kawakami T."/>
            <person name="Noguchi S."/>
            <person name="Itoh T."/>
            <person name="Shigeta K."/>
            <person name="Senba T."/>
            <person name="Matsumura K."/>
            <person name="Nakajima Y."/>
            <person name="Mizuno T."/>
            <person name="Morinaga M."/>
            <person name="Sasaki M."/>
            <person name="Togashi T."/>
            <person name="Oyama M."/>
            <person name="Hata H."/>
            <person name="Watanabe M."/>
            <person name="Komatsu T."/>
            <person name="Mizushima-Sugano J."/>
            <person name="Satoh T."/>
            <person name="Shirai Y."/>
            <person name="Takahashi Y."/>
            <person name="Nakagawa K."/>
            <person name="Okumura K."/>
            <person name="Nagase T."/>
            <person name="Nomura N."/>
            <person name="Kikuchi H."/>
            <person name="Masuho Y."/>
            <person name="Yamashita R."/>
            <person name="Nakai K."/>
            <person name="Yada T."/>
            <person name="Nakamura Y."/>
            <person name="Ohara O."/>
            <person name="Isogai T."/>
            <person name="Sugano S."/>
        </authorList>
    </citation>
    <scope>NUCLEOTIDE SEQUENCE [LARGE SCALE MRNA] (ISOFORMS 6 AND 7)</scope>
    <scope>VARIANT VAL-226</scope>
    <source>
        <tissue>Brain</tissue>
        <tissue>Thymus</tissue>
    </source>
</reference>
<reference key="7">
    <citation type="journal article" date="2004" name="Nature">
        <title>The DNA sequence and biology of human chromosome 19.</title>
        <authorList>
            <person name="Grimwood J."/>
            <person name="Gordon L.A."/>
            <person name="Olsen A.S."/>
            <person name="Terry A."/>
            <person name="Schmutz J."/>
            <person name="Lamerdin J.E."/>
            <person name="Hellsten U."/>
            <person name="Goodstein D."/>
            <person name="Couronne O."/>
            <person name="Tran-Gyamfi M."/>
            <person name="Aerts A."/>
            <person name="Altherr M."/>
            <person name="Ashworth L."/>
            <person name="Bajorek E."/>
            <person name="Black S."/>
            <person name="Branscomb E."/>
            <person name="Caenepeel S."/>
            <person name="Carrano A.V."/>
            <person name="Caoile C."/>
            <person name="Chan Y.M."/>
            <person name="Christensen M."/>
            <person name="Cleland C.A."/>
            <person name="Copeland A."/>
            <person name="Dalin E."/>
            <person name="Dehal P."/>
            <person name="Denys M."/>
            <person name="Detter J.C."/>
            <person name="Escobar J."/>
            <person name="Flowers D."/>
            <person name="Fotopulos D."/>
            <person name="Garcia C."/>
            <person name="Georgescu A.M."/>
            <person name="Glavina T."/>
            <person name="Gomez M."/>
            <person name="Gonzales E."/>
            <person name="Groza M."/>
            <person name="Hammon N."/>
            <person name="Hawkins T."/>
            <person name="Haydu L."/>
            <person name="Ho I."/>
            <person name="Huang W."/>
            <person name="Israni S."/>
            <person name="Jett J."/>
            <person name="Kadner K."/>
            <person name="Kimball H."/>
            <person name="Kobayashi A."/>
            <person name="Larionov V."/>
            <person name="Leem S.-H."/>
            <person name="Lopez F."/>
            <person name="Lou Y."/>
            <person name="Lowry S."/>
            <person name="Malfatti S."/>
            <person name="Martinez D."/>
            <person name="McCready P.M."/>
            <person name="Medina C."/>
            <person name="Morgan J."/>
            <person name="Nelson K."/>
            <person name="Nolan M."/>
            <person name="Ovcharenko I."/>
            <person name="Pitluck S."/>
            <person name="Pollard M."/>
            <person name="Popkie A.P."/>
            <person name="Predki P."/>
            <person name="Quan G."/>
            <person name="Ramirez L."/>
            <person name="Rash S."/>
            <person name="Retterer J."/>
            <person name="Rodriguez A."/>
            <person name="Rogers S."/>
            <person name="Salamov A."/>
            <person name="Salazar A."/>
            <person name="She X."/>
            <person name="Smith D."/>
            <person name="Slezak T."/>
            <person name="Solovyev V."/>
            <person name="Thayer N."/>
            <person name="Tice H."/>
            <person name="Tsai M."/>
            <person name="Ustaszewska A."/>
            <person name="Vo N."/>
            <person name="Wagner M."/>
            <person name="Wheeler J."/>
            <person name="Wu K."/>
            <person name="Xie G."/>
            <person name="Yang J."/>
            <person name="Dubchak I."/>
            <person name="Furey T.S."/>
            <person name="DeJong P."/>
            <person name="Dickson M."/>
            <person name="Gordon D."/>
            <person name="Eichler E.E."/>
            <person name="Pennacchio L.A."/>
            <person name="Richardson P."/>
            <person name="Stubbs L."/>
            <person name="Rokhsar D.S."/>
            <person name="Myers R.M."/>
            <person name="Rubin E.M."/>
            <person name="Lucas S.M."/>
        </authorList>
    </citation>
    <scope>NUCLEOTIDE SEQUENCE [LARGE SCALE GENOMIC DNA]</scope>
</reference>
<reference key="8">
    <citation type="journal article" date="2004" name="Genome Res.">
        <title>The status, quality, and expansion of the NIH full-length cDNA project: the Mammalian Gene Collection (MGC).</title>
        <authorList>
            <consortium name="The MGC Project Team"/>
        </authorList>
    </citation>
    <scope>NUCLEOTIDE SEQUENCE [LARGE SCALE MRNA] (ISOFORM 1)</scope>
    <scope>VARIANT VAL-226</scope>
    <source>
        <tissue>B-cell</tissue>
        <tissue>Liver</tissue>
    </source>
</reference>
<reference key="9">
    <citation type="journal article" date="2009" name="Science">
        <title>CD24 and Siglec-10 selectively repress tissue damage-induced immune responses.</title>
        <authorList>
            <person name="Chen G.Y."/>
            <person name="Tang J."/>
            <person name="Zheng P."/>
            <person name="Liu Y."/>
        </authorList>
    </citation>
    <scope>INTERACTION WITH CD24 AND HMGB1</scope>
    <scope>MUTAGENESIS OF ARG-119</scope>
</reference>
<reference key="10">
    <citation type="journal article" date="2015" name="J. Surg. Res.">
        <title>Siglec-10 is associated with survival and natural killer cell dysfunction in hepatocellular carcinoma.</title>
        <authorList>
            <person name="Zhang P."/>
            <person name="Lu X."/>
            <person name="Tao K."/>
            <person name="Shi L."/>
            <person name="Li W."/>
            <person name="Wang G."/>
            <person name="Wu K."/>
        </authorList>
    </citation>
    <scope>FUNCTION</scope>
</reference>